<gene>
    <name type="primary">RPL14</name>
    <name type="synonym">LPD23</name>
</gene>
<organism>
    <name type="scientific">Leishmania donovani</name>
    <dbReference type="NCBI Taxonomy" id="5661"/>
    <lineage>
        <taxon>Eukaryota</taxon>
        <taxon>Discoba</taxon>
        <taxon>Euglenozoa</taxon>
        <taxon>Kinetoplastea</taxon>
        <taxon>Metakinetoplastina</taxon>
        <taxon>Trypanosomatida</taxon>
        <taxon>Trypanosomatidae</taxon>
        <taxon>Leishmaniinae</taxon>
        <taxon>Leishmania</taxon>
    </lineage>
</organism>
<name>RL14_LEIDO</name>
<reference key="1">
    <citation type="journal article" date="1995" name="J. Exp. Med.">
        <title>Cloning and expression of a Leishmania donovani gene instructed by a peptide isolated from major histocompatibility complex class II molecules of infected macrophages.</title>
        <authorList>
            <person name="Campos-Neto A."/>
            <person name="Soong L."/>
            <person name="Cordova J.L."/>
            <person name="Sant'Angelo D."/>
            <person name="Skeiky Y.A.W."/>
            <person name="Ruddle N.H."/>
            <person name="Reed S.G."/>
            <person name="Janeway C. Jr."/>
            <person name="McMahon-Pratt D."/>
        </authorList>
    </citation>
    <scope>NUCLEOTIDE SEQUENCE [MRNA]</scope>
    <source>
        <strain>LS</strain>
    </source>
</reference>
<proteinExistence type="evidence at protein level"/>
<comment type="function">
    <text evidence="2">Component of the large ribosomal subunit. The ribosome is a large ribonucleoprotein complex responsible for the synthesis of proteins in the cell.</text>
</comment>
<comment type="similarity">
    <text evidence="2">Belongs to the eukaryotic ribosomal protein eL14 family.</text>
</comment>
<dbReference type="EMBL" id="X86551">
    <property type="protein sequence ID" value="CAA60246.1"/>
    <property type="molecule type" value="mRNA"/>
</dbReference>
<dbReference type="PIR" id="S54162">
    <property type="entry name" value="S54162"/>
</dbReference>
<dbReference type="PDB" id="5T2A">
    <property type="method" value="EM"/>
    <property type="resolution" value="2.90 A"/>
    <property type="chains" value="N=1-175"/>
</dbReference>
<dbReference type="PDB" id="6AZ3">
    <property type="method" value="EM"/>
    <property type="resolution" value="2.50 A"/>
    <property type="chains" value="K=3-151"/>
</dbReference>
<dbReference type="PDBsum" id="5T2A"/>
<dbReference type="PDBsum" id="6AZ3"/>
<dbReference type="EMDB" id="EMD-7025"/>
<dbReference type="SMR" id="Q25278"/>
<dbReference type="VEuPathDB" id="TriTrypDB:LdBPK_221370.1"/>
<dbReference type="VEuPathDB" id="TriTrypDB:LdCL_220020900"/>
<dbReference type="VEuPathDB" id="TriTrypDB:LdCL_220021300"/>
<dbReference type="VEuPathDB" id="TriTrypDB:LDHU3_22.1970"/>
<dbReference type="VEuPathDB" id="TriTrypDB:LDHU3_22.2010"/>
<dbReference type="OrthoDB" id="251811at2759"/>
<dbReference type="GO" id="GO:0022625">
    <property type="term" value="C:cytosolic large ribosomal subunit"/>
    <property type="evidence" value="ECO:0007669"/>
    <property type="project" value="TreeGrafter"/>
</dbReference>
<dbReference type="GO" id="GO:0003723">
    <property type="term" value="F:RNA binding"/>
    <property type="evidence" value="ECO:0007669"/>
    <property type="project" value="InterPro"/>
</dbReference>
<dbReference type="GO" id="GO:0003735">
    <property type="term" value="F:structural constituent of ribosome"/>
    <property type="evidence" value="ECO:0007669"/>
    <property type="project" value="InterPro"/>
</dbReference>
<dbReference type="GO" id="GO:0042273">
    <property type="term" value="P:ribosomal large subunit biogenesis"/>
    <property type="evidence" value="ECO:0007669"/>
    <property type="project" value="TreeGrafter"/>
</dbReference>
<dbReference type="GO" id="GO:0006412">
    <property type="term" value="P:translation"/>
    <property type="evidence" value="ECO:0007669"/>
    <property type="project" value="InterPro"/>
</dbReference>
<dbReference type="CDD" id="cd06088">
    <property type="entry name" value="KOW_RPL14"/>
    <property type="match status" value="1"/>
</dbReference>
<dbReference type="FunFam" id="2.30.30.30:FF:000062">
    <property type="entry name" value="Putative 40S ribosomal protein L14"/>
    <property type="match status" value="1"/>
</dbReference>
<dbReference type="Gene3D" id="2.30.30.30">
    <property type="match status" value="1"/>
</dbReference>
<dbReference type="InterPro" id="IPR005824">
    <property type="entry name" value="KOW"/>
</dbReference>
<dbReference type="InterPro" id="IPR014722">
    <property type="entry name" value="Rib_uL2_dom2"/>
</dbReference>
<dbReference type="InterPro" id="IPR039660">
    <property type="entry name" value="Ribosomal_eL14"/>
</dbReference>
<dbReference type="InterPro" id="IPR002784">
    <property type="entry name" value="Ribosomal_eL14_dom"/>
</dbReference>
<dbReference type="InterPro" id="IPR041985">
    <property type="entry name" value="Ribosomal_eL14_KOW"/>
</dbReference>
<dbReference type="InterPro" id="IPR008991">
    <property type="entry name" value="Translation_prot_SH3-like_sf"/>
</dbReference>
<dbReference type="PANTHER" id="PTHR11127">
    <property type="entry name" value="60S RIBOSOMAL PROTEIN L14"/>
    <property type="match status" value="1"/>
</dbReference>
<dbReference type="PANTHER" id="PTHR11127:SF2">
    <property type="entry name" value="LARGE RIBOSOMAL SUBUNIT PROTEIN EL14"/>
    <property type="match status" value="1"/>
</dbReference>
<dbReference type="Pfam" id="PF00467">
    <property type="entry name" value="KOW"/>
    <property type="match status" value="1"/>
</dbReference>
<dbReference type="Pfam" id="PF01929">
    <property type="entry name" value="Ribosomal_L14e"/>
    <property type="match status" value="1"/>
</dbReference>
<dbReference type="SUPFAM" id="SSF50104">
    <property type="entry name" value="Translation proteins SH3-like domain"/>
    <property type="match status" value="1"/>
</dbReference>
<protein>
    <recommendedName>
        <fullName evidence="2">Large ribosomal subunit protein eL14</fullName>
    </recommendedName>
    <alternativeName>
        <fullName>23 kDa cell surface protein</fullName>
    </alternativeName>
    <alternativeName>
        <fullName evidence="2">60S ribosomal protein L14</fullName>
    </alternativeName>
    <alternativeName>
        <fullName>LDP 23</fullName>
    </alternativeName>
</protein>
<accession>Q25278</accession>
<sequence>MVKSHYICAGRLVRILRGPRQDRVGVIVDIVDANRVLVENPEDAKMWRHVQNLKNVEPLKYCVSVSRNCSAKALKDALASSKALEKYAKTRTAARVEAKKACAASTDFERYQLRVARRSRAHWARKVFDEKDAKTPVSWHKVALKKMQKKAAKMDSTEGAKRRMQKAIAARKAKK</sequence>
<feature type="chain" id="PRO_0000132037" description="Large ribosomal subunit protein eL14">
    <location>
        <begin position="1"/>
        <end position="175"/>
    </location>
</feature>
<feature type="region of interest" description="Disordered" evidence="1">
    <location>
        <begin position="150"/>
        <end position="175"/>
    </location>
</feature>
<feature type="compositionally biased region" description="Basic and acidic residues" evidence="1">
    <location>
        <begin position="152"/>
        <end position="161"/>
    </location>
</feature>
<feature type="compositionally biased region" description="Basic residues" evidence="1">
    <location>
        <begin position="162"/>
        <end position="175"/>
    </location>
</feature>
<evidence type="ECO:0000256" key="1">
    <source>
        <dbReference type="SAM" id="MobiDB-lite"/>
    </source>
</evidence>
<evidence type="ECO:0000305" key="2"/>
<keyword id="KW-0002">3D-structure</keyword>
<keyword id="KW-0687">Ribonucleoprotein</keyword>
<keyword id="KW-0689">Ribosomal protein</keyword>